<name>PCAJ_PSEPK</name>
<proteinExistence type="inferred from homology"/>
<comment type="catalytic activity">
    <reaction>
        <text>3-oxoadipate + succinyl-CoA = 3-oxoadipyl-CoA + succinate</text>
        <dbReference type="Rhea" id="RHEA:12048"/>
        <dbReference type="ChEBI" id="CHEBI:15775"/>
        <dbReference type="ChEBI" id="CHEBI:30031"/>
        <dbReference type="ChEBI" id="CHEBI:57292"/>
        <dbReference type="ChEBI" id="CHEBI:57348"/>
        <dbReference type="EC" id="2.8.3.6"/>
    </reaction>
</comment>
<comment type="pathway">
    <text>Aromatic compound metabolism; beta-ketoadipate pathway; acetyl-CoA and succinyl-CoA from 3-oxoadipate: step 1/2.</text>
</comment>
<comment type="subunit">
    <text evidence="1">Heterodimer.</text>
</comment>
<comment type="similarity">
    <text evidence="3">Belongs to the 3-oxoacid CoA-transferase subunit B family.</text>
</comment>
<organism>
    <name type="scientific">Pseudomonas putida (strain ATCC 47054 / DSM 6125 / CFBP 8728 / NCIMB 11950 / KT2440)</name>
    <dbReference type="NCBI Taxonomy" id="160488"/>
    <lineage>
        <taxon>Bacteria</taxon>
        <taxon>Pseudomonadati</taxon>
        <taxon>Pseudomonadota</taxon>
        <taxon>Gammaproteobacteria</taxon>
        <taxon>Pseudomonadales</taxon>
        <taxon>Pseudomonadaceae</taxon>
        <taxon>Pseudomonas</taxon>
    </lineage>
</organism>
<gene>
    <name type="primary">pcaJ</name>
    <name type="ordered locus">PP_3952</name>
</gene>
<dbReference type="EC" id="2.8.3.6"/>
<dbReference type="EMBL" id="AE015451">
    <property type="protein sequence ID" value="AAN69546.1"/>
    <property type="molecule type" value="Genomic_DNA"/>
</dbReference>
<dbReference type="RefSeq" id="NP_746082.1">
    <property type="nucleotide sequence ID" value="NC_002947.4"/>
</dbReference>
<dbReference type="RefSeq" id="WP_003251131.1">
    <property type="nucleotide sequence ID" value="NZ_CP169744.1"/>
</dbReference>
<dbReference type="SMR" id="P0A101"/>
<dbReference type="STRING" id="160488.PP_3952"/>
<dbReference type="PaxDb" id="160488-PP_3952"/>
<dbReference type="KEGG" id="ppu:PP_3952"/>
<dbReference type="PATRIC" id="fig|160488.4.peg.4210"/>
<dbReference type="eggNOG" id="COG2057">
    <property type="taxonomic scope" value="Bacteria"/>
</dbReference>
<dbReference type="HOGENOM" id="CLU_019942_4_1_6"/>
<dbReference type="OrthoDB" id="9778604at2"/>
<dbReference type="PhylomeDB" id="P0A101"/>
<dbReference type="BioCyc" id="PPUT160488:G1G01-4217-MONOMER"/>
<dbReference type="UniPathway" id="UPA00157">
    <property type="reaction ID" value="UER00262"/>
</dbReference>
<dbReference type="Proteomes" id="UP000000556">
    <property type="component" value="Chromosome"/>
</dbReference>
<dbReference type="GO" id="GO:0047569">
    <property type="term" value="F:3-oxoadipate CoA-transferase activity"/>
    <property type="evidence" value="ECO:0007669"/>
    <property type="project" value="UniProtKB-EC"/>
</dbReference>
<dbReference type="GO" id="GO:0042952">
    <property type="term" value="P:beta-ketoadipate pathway"/>
    <property type="evidence" value="ECO:0007669"/>
    <property type="project" value="UniProtKB-UniPathway"/>
</dbReference>
<dbReference type="Gene3D" id="3.40.1080.10">
    <property type="entry name" value="Glutaconate Coenzyme A-transferase"/>
    <property type="match status" value="1"/>
</dbReference>
<dbReference type="InterPro" id="IPR012791">
    <property type="entry name" value="3-oxoacid_CoA-transf_B"/>
</dbReference>
<dbReference type="InterPro" id="IPR004165">
    <property type="entry name" value="CoA_trans_fam_I"/>
</dbReference>
<dbReference type="InterPro" id="IPR004164">
    <property type="entry name" value="CoA_transf_AS"/>
</dbReference>
<dbReference type="InterPro" id="IPR037171">
    <property type="entry name" value="NagB/RpiA_transferase-like"/>
</dbReference>
<dbReference type="NCBIfam" id="TIGR02428">
    <property type="entry name" value="pcaJ_scoB_fam"/>
    <property type="match status" value="1"/>
</dbReference>
<dbReference type="PANTHER" id="PTHR13707">
    <property type="entry name" value="KETOACID-COENZYME A TRANSFERASE"/>
    <property type="match status" value="1"/>
</dbReference>
<dbReference type="PANTHER" id="PTHR13707:SF57">
    <property type="entry name" value="SUCCINYL-COA:3-KETOACID COENZYME A TRANSFERASE SUBUNIT B-RELATED"/>
    <property type="match status" value="1"/>
</dbReference>
<dbReference type="Pfam" id="PF01144">
    <property type="entry name" value="CoA_trans"/>
    <property type="match status" value="1"/>
</dbReference>
<dbReference type="SMART" id="SM00882">
    <property type="entry name" value="CoA_trans"/>
    <property type="match status" value="1"/>
</dbReference>
<dbReference type="SUPFAM" id="SSF100950">
    <property type="entry name" value="NagB/RpiA/CoA transferase-like"/>
    <property type="match status" value="1"/>
</dbReference>
<dbReference type="PROSITE" id="PS01274">
    <property type="entry name" value="COA_TRANSF_2"/>
    <property type="match status" value="1"/>
</dbReference>
<keyword id="KW-0058">Aromatic hydrocarbons catabolism</keyword>
<keyword id="KW-1185">Reference proteome</keyword>
<keyword id="KW-0808">Transferase</keyword>
<protein>
    <recommendedName>
        <fullName>3-oxoadipate CoA-transferase subunit B</fullName>
        <ecNumber>2.8.3.6</ecNumber>
    </recommendedName>
    <alternativeName>
        <fullName>Beta-ketoadipate:succinyl-CoA transferase subunit B</fullName>
    </alternativeName>
</protein>
<accession>P0A101</accession>
<accession>Q01104</accession>
<sequence length="213" mass="22552">MTITKKLSRTEMAQRVAADIQEGAYVNLGIGAPTLVANYLGDKEVFLHSENGLLGMGPSPAPGEEDDDLINAGKQHVTLLTGGAFFHHADSFSMMRGGHLDIAVLGAFQVSVKGDLANWHTGAEGSIPAVGGAMDLATGARQVFVMMDHLTKTGESKLVPECTYPLTGIACVSRIYTDLAVLEVTPEGLKVVEICADIDFDELQKLSGVPLIK</sequence>
<evidence type="ECO:0000250" key="1"/>
<evidence type="ECO:0000255" key="2">
    <source>
        <dbReference type="PROSITE-ProRule" id="PRU10034"/>
    </source>
</evidence>
<evidence type="ECO:0000305" key="3"/>
<feature type="initiator methionine" description="Removed" evidence="1">
    <location>
        <position position="1"/>
    </location>
</feature>
<feature type="chain" id="PRO_0000157918" description="3-oxoadipate CoA-transferase subunit B">
    <location>
        <begin position="2"/>
        <end position="213"/>
    </location>
</feature>
<feature type="active site" evidence="2">
    <location>
        <position position="50"/>
    </location>
</feature>
<reference key="1">
    <citation type="journal article" date="2002" name="Environ. Microbiol.">
        <title>Complete genome sequence and comparative analysis of the metabolically versatile Pseudomonas putida KT2440.</title>
        <authorList>
            <person name="Nelson K.E."/>
            <person name="Weinel C."/>
            <person name="Paulsen I.T."/>
            <person name="Dodson R.J."/>
            <person name="Hilbert H."/>
            <person name="Martins dos Santos V.A.P."/>
            <person name="Fouts D.E."/>
            <person name="Gill S.R."/>
            <person name="Pop M."/>
            <person name="Holmes M."/>
            <person name="Brinkac L.M."/>
            <person name="Beanan M.J."/>
            <person name="DeBoy R.T."/>
            <person name="Daugherty S.C."/>
            <person name="Kolonay J.F."/>
            <person name="Madupu R."/>
            <person name="Nelson W.C."/>
            <person name="White O."/>
            <person name="Peterson J.D."/>
            <person name="Khouri H.M."/>
            <person name="Hance I."/>
            <person name="Chris Lee P."/>
            <person name="Holtzapple E.K."/>
            <person name="Scanlan D."/>
            <person name="Tran K."/>
            <person name="Moazzez A."/>
            <person name="Utterback T.R."/>
            <person name="Rizzo M."/>
            <person name="Lee K."/>
            <person name="Kosack D."/>
            <person name="Moestl D."/>
            <person name="Wedler H."/>
            <person name="Lauber J."/>
            <person name="Stjepandic D."/>
            <person name="Hoheisel J."/>
            <person name="Straetz M."/>
            <person name="Heim S."/>
            <person name="Kiewitz C."/>
            <person name="Eisen J.A."/>
            <person name="Timmis K.N."/>
            <person name="Duesterhoeft A."/>
            <person name="Tuemmler B."/>
            <person name="Fraser C.M."/>
        </authorList>
    </citation>
    <scope>NUCLEOTIDE SEQUENCE [LARGE SCALE GENOMIC DNA]</scope>
    <source>
        <strain>ATCC 47054 / DSM 6125 / CFBP 8728 / NCIMB 11950 / KT2440</strain>
    </source>
</reference>